<organism>
    <name type="scientific">Saccharopolyspora erythraea (strain ATCC 11635 / DSM 40517 / JCM 4748 / NBRC 13426 / NCIMB 8594 / NRRL 2338)</name>
    <dbReference type="NCBI Taxonomy" id="405948"/>
    <lineage>
        <taxon>Bacteria</taxon>
        <taxon>Bacillati</taxon>
        <taxon>Actinomycetota</taxon>
        <taxon>Actinomycetes</taxon>
        <taxon>Pseudonocardiales</taxon>
        <taxon>Pseudonocardiaceae</taxon>
        <taxon>Saccharopolyspora</taxon>
    </lineage>
</organism>
<protein>
    <recommendedName>
        <fullName evidence="1">Acireductone dioxygenase</fullName>
    </recommendedName>
    <alternativeName>
        <fullName evidence="1">1,2-dihydroxy-3-keto-5-methylthiopentene dioxygenase</fullName>
        <shortName evidence="1">DHK-MTPene dioxygenase</shortName>
    </alternativeName>
    <alternativeName>
        <fullName evidence="1">Acireductone dioxygenase (Fe(2+)-requiring)</fullName>
        <shortName evidence="1">ARD'</shortName>
        <shortName evidence="1">Fe-ARD</shortName>
        <ecNumber evidence="1">1.13.11.54</ecNumber>
    </alternativeName>
    <alternativeName>
        <fullName evidence="1">Acireductone dioxygenase (Ni(2+)-requiring)</fullName>
        <shortName evidence="1">ARD</shortName>
        <shortName evidence="1">Ni-ARD</shortName>
        <ecNumber evidence="1">1.13.11.53</ecNumber>
    </alternativeName>
</protein>
<comment type="function">
    <text evidence="1">Catalyzes 2 different reactions between oxygen and the acireductone 1,2-dihydroxy-3-keto-5-methylthiopentene (DHK-MTPene) depending upon the metal bound in the active site. Fe-containing acireductone dioxygenase (Fe-ARD) produces formate and 2-keto-4-methylthiobutyrate (KMTB), the alpha-ketoacid precursor of methionine in the methionine recycle pathway. Ni-containing acireductone dioxygenase (Ni-ARD) produces methylthiopropionate, carbon monoxide and formate, and does not lie on the methionine recycle pathway.</text>
</comment>
<comment type="catalytic activity">
    <reaction evidence="1">
        <text>1,2-dihydroxy-5-(methylsulfanyl)pent-1-en-3-one + O2 = 3-(methylsulfanyl)propanoate + CO + formate + 2 H(+)</text>
        <dbReference type="Rhea" id="RHEA:14161"/>
        <dbReference type="ChEBI" id="CHEBI:15378"/>
        <dbReference type="ChEBI" id="CHEBI:15379"/>
        <dbReference type="ChEBI" id="CHEBI:15740"/>
        <dbReference type="ChEBI" id="CHEBI:17245"/>
        <dbReference type="ChEBI" id="CHEBI:49016"/>
        <dbReference type="ChEBI" id="CHEBI:49252"/>
        <dbReference type="EC" id="1.13.11.53"/>
    </reaction>
</comment>
<comment type="catalytic activity">
    <reaction evidence="1">
        <text>1,2-dihydroxy-5-(methylsulfanyl)pent-1-en-3-one + O2 = 4-methylsulfanyl-2-oxobutanoate + formate + 2 H(+)</text>
        <dbReference type="Rhea" id="RHEA:24504"/>
        <dbReference type="ChEBI" id="CHEBI:15378"/>
        <dbReference type="ChEBI" id="CHEBI:15379"/>
        <dbReference type="ChEBI" id="CHEBI:15740"/>
        <dbReference type="ChEBI" id="CHEBI:16723"/>
        <dbReference type="ChEBI" id="CHEBI:49252"/>
        <dbReference type="EC" id="1.13.11.54"/>
    </reaction>
</comment>
<comment type="cofactor">
    <cofactor evidence="1">
        <name>Fe(2+)</name>
        <dbReference type="ChEBI" id="CHEBI:29033"/>
    </cofactor>
    <text evidence="1">Binds 1 Fe(2+) cation per monomer.</text>
</comment>
<comment type="cofactor">
    <cofactor evidence="1">
        <name>Ni(2+)</name>
        <dbReference type="ChEBI" id="CHEBI:49786"/>
    </cofactor>
    <text evidence="1">Binds 1 nickel ion per monomer.</text>
</comment>
<comment type="pathway">
    <text evidence="1">Amino-acid biosynthesis; L-methionine biosynthesis via salvage pathway; L-methionine from S-methyl-5-thio-alpha-D-ribose 1-phosphate: step 5/6.</text>
</comment>
<comment type="subunit">
    <text evidence="1">Monomer.</text>
</comment>
<comment type="similarity">
    <text evidence="1">Belongs to the acireductone dioxygenase (ARD) family.</text>
</comment>
<name>MTND_SACEN</name>
<gene>
    <name evidence="1" type="primary">mtnD</name>
    <name type="ordered locus">SACE_3605</name>
</gene>
<feature type="chain" id="PRO_0000359228" description="Acireductone dioxygenase">
    <location>
        <begin position="1"/>
        <end position="190"/>
    </location>
</feature>
<feature type="binding site" evidence="1">
    <location>
        <position position="101"/>
    </location>
    <ligand>
        <name>Fe(2+)</name>
        <dbReference type="ChEBI" id="CHEBI:29033"/>
    </ligand>
</feature>
<feature type="binding site" evidence="1">
    <location>
        <position position="101"/>
    </location>
    <ligand>
        <name>Ni(2+)</name>
        <dbReference type="ChEBI" id="CHEBI:49786"/>
    </ligand>
</feature>
<feature type="binding site" evidence="1">
    <location>
        <position position="103"/>
    </location>
    <ligand>
        <name>Fe(2+)</name>
        <dbReference type="ChEBI" id="CHEBI:29033"/>
    </ligand>
</feature>
<feature type="binding site" evidence="1">
    <location>
        <position position="103"/>
    </location>
    <ligand>
        <name>Ni(2+)</name>
        <dbReference type="ChEBI" id="CHEBI:49786"/>
    </ligand>
</feature>
<feature type="binding site" evidence="1">
    <location>
        <position position="107"/>
    </location>
    <ligand>
        <name>Fe(2+)</name>
        <dbReference type="ChEBI" id="CHEBI:29033"/>
    </ligand>
</feature>
<feature type="binding site" evidence="1">
    <location>
        <position position="107"/>
    </location>
    <ligand>
        <name>Ni(2+)</name>
        <dbReference type="ChEBI" id="CHEBI:49786"/>
    </ligand>
</feature>
<feature type="binding site" evidence="1">
    <location>
        <position position="145"/>
    </location>
    <ligand>
        <name>Fe(2+)</name>
        <dbReference type="ChEBI" id="CHEBI:29033"/>
    </ligand>
</feature>
<feature type="binding site" evidence="1">
    <location>
        <position position="145"/>
    </location>
    <ligand>
        <name>Ni(2+)</name>
        <dbReference type="ChEBI" id="CHEBI:49786"/>
    </ligand>
</feature>
<feature type="site" description="May play a role in metal incorporation in vivo" evidence="1">
    <location>
        <position position="100"/>
    </location>
</feature>
<feature type="site" description="May play a role in transmitting local conformational changes" evidence="1">
    <location>
        <position position="106"/>
    </location>
</feature>
<feature type="site" description="Important to generate the dianion" evidence="1">
    <location>
        <position position="109"/>
    </location>
</feature>
<evidence type="ECO:0000255" key="1">
    <source>
        <dbReference type="HAMAP-Rule" id="MF_01682"/>
    </source>
</evidence>
<proteinExistence type="inferred from homology"/>
<sequence length="190" mass="21655">MSLLTVWPDTDAGTVELRTEDPQEITDVLKQFGVSFSRWELRELPERPSSEEVLEAYRAEVDEVIEREGYIKVDAAVMAPSQDPQWPAQAKAAREKFLSEHTHDDDEDRFFARGAGVFYLHIGDRVYAMLCEAGDLLSVPANTTHWFDMGTEPDFVAIRFFHDDDGWVGAFLNTDTAEKFPTFDELMASR</sequence>
<reference key="1">
    <citation type="journal article" date="2007" name="Nat. Biotechnol.">
        <title>Complete genome sequence of the erythromycin-producing bacterium Saccharopolyspora erythraea NRRL23338.</title>
        <authorList>
            <person name="Oliynyk M."/>
            <person name="Samborskyy M."/>
            <person name="Lester J.B."/>
            <person name="Mironenko T."/>
            <person name="Scott N."/>
            <person name="Dickens S."/>
            <person name="Haydock S.F."/>
            <person name="Leadlay P.F."/>
        </authorList>
    </citation>
    <scope>NUCLEOTIDE SEQUENCE [LARGE SCALE GENOMIC DNA]</scope>
    <source>
        <strain>ATCC 11635 / DSM 40517 / JCM 4748 / NBRC 13426 / NCIMB 8594 / NRRL 2338</strain>
    </source>
</reference>
<accession>A4FFQ4</accession>
<keyword id="KW-0028">Amino-acid biosynthesis</keyword>
<keyword id="KW-0223">Dioxygenase</keyword>
<keyword id="KW-0408">Iron</keyword>
<keyword id="KW-0479">Metal-binding</keyword>
<keyword id="KW-0486">Methionine biosynthesis</keyword>
<keyword id="KW-0533">Nickel</keyword>
<keyword id="KW-0560">Oxidoreductase</keyword>
<keyword id="KW-1185">Reference proteome</keyword>
<dbReference type="EC" id="1.13.11.54" evidence="1"/>
<dbReference type="EC" id="1.13.11.53" evidence="1"/>
<dbReference type="EMBL" id="AM420293">
    <property type="protein sequence ID" value="CAM02879.1"/>
    <property type="molecule type" value="Genomic_DNA"/>
</dbReference>
<dbReference type="RefSeq" id="WP_009949021.1">
    <property type="nucleotide sequence ID" value="NC_009142.1"/>
</dbReference>
<dbReference type="SMR" id="A4FFQ4"/>
<dbReference type="STRING" id="405948.SACE_3605"/>
<dbReference type="KEGG" id="sen:SACE_3605"/>
<dbReference type="eggNOG" id="COG1791">
    <property type="taxonomic scope" value="Bacteria"/>
</dbReference>
<dbReference type="HOGENOM" id="CLU_125400_0_0_11"/>
<dbReference type="OrthoDB" id="9795636at2"/>
<dbReference type="UniPathway" id="UPA00904">
    <property type="reaction ID" value="UER00878"/>
</dbReference>
<dbReference type="Proteomes" id="UP000006728">
    <property type="component" value="Chromosome"/>
</dbReference>
<dbReference type="GO" id="GO:0010308">
    <property type="term" value="F:acireductone dioxygenase (Ni2+-requiring) activity"/>
    <property type="evidence" value="ECO:0007669"/>
    <property type="project" value="UniProtKB-UniRule"/>
</dbReference>
<dbReference type="GO" id="GO:0010309">
    <property type="term" value="F:acireductone dioxygenase [iron(II)-requiring] activity"/>
    <property type="evidence" value="ECO:0007669"/>
    <property type="project" value="UniProtKB-UniRule"/>
</dbReference>
<dbReference type="GO" id="GO:0005506">
    <property type="term" value="F:iron ion binding"/>
    <property type="evidence" value="ECO:0007669"/>
    <property type="project" value="UniProtKB-UniRule"/>
</dbReference>
<dbReference type="GO" id="GO:0016151">
    <property type="term" value="F:nickel cation binding"/>
    <property type="evidence" value="ECO:0007669"/>
    <property type="project" value="UniProtKB-UniRule"/>
</dbReference>
<dbReference type="GO" id="GO:0019509">
    <property type="term" value="P:L-methionine salvage from methylthioadenosine"/>
    <property type="evidence" value="ECO:0007669"/>
    <property type="project" value="UniProtKB-UniRule"/>
</dbReference>
<dbReference type="GO" id="GO:0019284">
    <property type="term" value="P:L-methionine salvage from S-adenosylmethionine"/>
    <property type="evidence" value="ECO:0007669"/>
    <property type="project" value="InterPro"/>
</dbReference>
<dbReference type="CDD" id="cd02232">
    <property type="entry name" value="cupin_ARD"/>
    <property type="match status" value="1"/>
</dbReference>
<dbReference type="Gene3D" id="2.60.120.10">
    <property type="entry name" value="Jelly Rolls"/>
    <property type="match status" value="1"/>
</dbReference>
<dbReference type="HAMAP" id="MF_01682">
    <property type="entry name" value="Salvage_MtnD"/>
    <property type="match status" value="1"/>
</dbReference>
<dbReference type="InterPro" id="IPR004313">
    <property type="entry name" value="ARD"/>
</dbReference>
<dbReference type="InterPro" id="IPR023956">
    <property type="entry name" value="ARD_bac"/>
</dbReference>
<dbReference type="InterPro" id="IPR014710">
    <property type="entry name" value="RmlC-like_jellyroll"/>
</dbReference>
<dbReference type="InterPro" id="IPR011051">
    <property type="entry name" value="RmlC_Cupin_sf"/>
</dbReference>
<dbReference type="PANTHER" id="PTHR23418">
    <property type="entry name" value="ACIREDUCTONE DIOXYGENASE"/>
    <property type="match status" value="1"/>
</dbReference>
<dbReference type="PANTHER" id="PTHR23418:SF0">
    <property type="entry name" value="ACIREDUCTONE DIOXYGENASE"/>
    <property type="match status" value="1"/>
</dbReference>
<dbReference type="Pfam" id="PF03079">
    <property type="entry name" value="ARD"/>
    <property type="match status" value="1"/>
</dbReference>
<dbReference type="SUPFAM" id="SSF51182">
    <property type="entry name" value="RmlC-like cupins"/>
    <property type="match status" value="1"/>
</dbReference>